<comment type="subcellular location">
    <subcellularLocation>
        <location evidence="1">Cell inner membrane</location>
        <topology evidence="1">Multi-pass membrane protein</topology>
    </subcellularLocation>
</comment>
<comment type="similarity">
    <text evidence="1">Belongs to the UPF0299 family.</text>
</comment>
<organism>
    <name type="scientific">Vibrio cholerae serotype O1 (strain M66-2)</name>
    <dbReference type="NCBI Taxonomy" id="579112"/>
    <lineage>
        <taxon>Bacteria</taxon>
        <taxon>Pseudomonadati</taxon>
        <taxon>Pseudomonadota</taxon>
        <taxon>Gammaproteobacteria</taxon>
        <taxon>Vibrionales</taxon>
        <taxon>Vibrionaceae</taxon>
        <taxon>Vibrio</taxon>
    </lineage>
</organism>
<sequence>MLILLMIKKIAQYCVSMGLIFLCLLAGINLQTWLGIAIPGSIIGLLILFGLMASGLVPVEWVKPSATLFIRYMILLFVPISVGLMVHFDTLLANLAPILASAIGGTLIVMVTLGLILDRMLKKGKKSCG</sequence>
<proteinExistence type="inferred from homology"/>
<protein>
    <recommendedName>
        <fullName evidence="1">UPF0299 membrane protein VCM66_1188</fullName>
    </recommendedName>
</protein>
<keyword id="KW-0997">Cell inner membrane</keyword>
<keyword id="KW-1003">Cell membrane</keyword>
<keyword id="KW-0472">Membrane</keyword>
<keyword id="KW-0812">Transmembrane</keyword>
<keyword id="KW-1133">Transmembrane helix</keyword>
<dbReference type="EMBL" id="CP001233">
    <property type="protein sequence ID" value="ACP05505.1"/>
    <property type="molecule type" value="Genomic_DNA"/>
</dbReference>
<dbReference type="SMR" id="C3LLS9"/>
<dbReference type="KEGG" id="vcm:VCM66_1188"/>
<dbReference type="HOGENOM" id="CLU_113736_1_1_6"/>
<dbReference type="Proteomes" id="UP000001217">
    <property type="component" value="Chromosome I"/>
</dbReference>
<dbReference type="GO" id="GO:0005886">
    <property type="term" value="C:plasma membrane"/>
    <property type="evidence" value="ECO:0007669"/>
    <property type="project" value="UniProtKB-SubCell"/>
</dbReference>
<dbReference type="HAMAP" id="MF_01144">
    <property type="entry name" value="UPF0299"/>
    <property type="match status" value="1"/>
</dbReference>
<dbReference type="InterPro" id="IPR005538">
    <property type="entry name" value="LrgA/CidA"/>
</dbReference>
<dbReference type="InterPro" id="IPR022957">
    <property type="entry name" value="Uncharacterised_UPF0299"/>
</dbReference>
<dbReference type="PANTHER" id="PTHR33931">
    <property type="entry name" value="HOLIN-LIKE PROTEIN CIDA-RELATED"/>
    <property type="match status" value="1"/>
</dbReference>
<dbReference type="PANTHER" id="PTHR33931:SF5">
    <property type="entry name" value="UPF0299 MEMBRANE PROTEIN YOHJ"/>
    <property type="match status" value="1"/>
</dbReference>
<dbReference type="Pfam" id="PF03788">
    <property type="entry name" value="LrgA"/>
    <property type="match status" value="1"/>
</dbReference>
<reference key="1">
    <citation type="journal article" date="2008" name="PLoS ONE">
        <title>A recalibrated molecular clock and independent origins for the cholera pandemic clones.</title>
        <authorList>
            <person name="Feng L."/>
            <person name="Reeves P.R."/>
            <person name="Lan R."/>
            <person name="Ren Y."/>
            <person name="Gao C."/>
            <person name="Zhou Z."/>
            <person name="Ren Y."/>
            <person name="Cheng J."/>
            <person name="Wang W."/>
            <person name="Wang J."/>
            <person name="Qian W."/>
            <person name="Li D."/>
            <person name="Wang L."/>
        </authorList>
    </citation>
    <scope>NUCLEOTIDE SEQUENCE [LARGE SCALE GENOMIC DNA]</scope>
    <source>
        <strain>M66-2</strain>
    </source>
</reference>
<accession>C3LLS9</accession>
<name>Y1188_VIBCM</name>
<evidence type="ECO:0000255" key="1">
    <source>
        <dbReference type="HAMAP-Rule" id="MF_01144"/>
    </source>
</evidence>
<gene>
    <name type="ordered locus">VCM66_1188</name>
</gene>
<feature type="chain" id="PRO_1000164110" description="UPF0299 membrane protein VCM66_1188">
    <location>
        <begin position="1"/>
        <end position="129"/>
    </location>
</feature>
<feature type="transmembrane region" description="Helical" evidence="1">
    <location>
        <begin position="10"/>
        <end position="30"/>
    </location>
</feature>
<feature type="transmembrane region" description="Helical" evidence="1">
    <location>
        <begin position="33"/>
        <end position="53"/>
    </location>
</feature>
<feature type="transmembrane region" description="Helical" evidence="1">
    <location>
        <begin position="73"/>
        <end position="93"/>
    </location>
</feature>
<feature type="transmembrane region" description="Helical" evidence="1">
    <location>
        <begin position="97"/>
        <end position="117"/>
    </location>
</feature>